<sequence>MTEIYRTISTGRGDDVSPTKCRERRRRRIEMRRQAAVFGEPSSSRNRDRTDMEVYSSFDVPLRKQARRSEIGGLPADIGGFLAPPAASSCQKSEAPVWKGEETEDEPLYGIVSVMGRSRKMEDSVTVKPNLCKPEVNRQRPVHFFAVYDGHGGSQVSTLCSTTMHTFVKEELEQNLEEEEEGSENDVVERKWRGVMKRSFKRMDEMATSTCVCGTSVPLCNCDPREAAISGSTAVTAVLTHDHIIVANTGDSRAVLCRNGMAIPLSNDHKPDRPDERARIEAAGGRVLVVDGARVEGILATSRAIGDRYLKPMVAWEPEVTFMRRESGDECLVLASDGLWDVLSSQLACDIARFCLREETPSSLDLNRMAQEDDNDGEQNPSRSVLAATLLTRLALGRQSSDNISVVVIDLKNSSQ</sequence>
<organism>
    <name type="scientific">Arabidopsis thaliana</name>
    <name type="common">Mouse-ear cress</name>
    <dbReference type="NCBI Taxonomy" id="3702"/>
    <lineage>
        <taxon>Eukaryota</taxon>
        <taxon>Viridiplantae</taxon>
        <taxon>Streptophyta</taxon>
        <taxon>Embryophyta</taxon>
        <taxon>Tracheophyta</taxon>
        <taxon>Spermatophyta</taxon>
        <taxon>Magnoliopsida</taxon>
        <taxon>eudicotyledons</taxon>
        <taxon>Gunneridae</taxon>
        <taxon>Pentapetalae</taxon>
        <taxon>rosids</taxon>
        <taxon>malvids</taxon>
        <taxon>Brassicales</taxon>
        <taxon>Brassicaceae</taxon>
        <taxon>Camelineae</taxon>
        <taxon>Arabidopsis</taxon>
    </lineage>
</organism>
<keyword id="KW-0378">Hydrolase</keyword>
<keyword id="KW-0460">Magnesium</keyword>
<keyword id="KW-0464">Manganese</keyword>
<keyword id="KW-0479">Metal-binding</keyword>
<keyword id="KW-0904">Protein phosphatase</keyword>
<keyword id="KW-1185">Reference proteome</keyword>
<proteinExistence type="evidence at protein level"/>
<accession>Q9FLI3</accession>
<protein>
    <recommendedName>
        <fullName>Probable protein phosphatase 2C 75</fullName>
        <shortName>AtPP2C75</shortName>
        <ecNumber>3.1.3.16</ecNumber>
    </recommendedName>
    <alternativeName>
        <fullName>Protein ABA-HYPERSENSITIVE GERMINATION 1</fullName>
    </alternativeName>
    <alternativeName>
        <fullName>Protein phosphatase 2C AHG1</fullName>
        <shortName>PP2C AHG1</shortName>
    </alternativeName>
</protein>
<reference key="1">
    <citation type="journal article" date="1998" name="DNA Res.">
        <title>Structural analysis of Arabidopsis thaliana chromosome 5. IV. Sequence features of the regions of 1,456,315 bp covered by nineteen physically assigned P1 and TAC clones.</title>
        <authorList>
            <person name="Sato S."/>
            <person name="Kaneko T."/>
            <person name="Kotani H."/>
            <person name="Nakamura Y."/>
            <person name="Asamizu E."/>
            <person name="Miyajima N."/>
            <person name="Tabata S."/>
        </authorList>
    </citation>
    <scope>NUCLEOTIDE SEQUENCE [LARGE SCALE GENOMIC DNA]</scope>
    <source>
        <strain>cv. Columbia</strain>
    </source>
</reference>
<reference key="2">
    <citation type="journal article" date="2017" name="Plant J.">
        <title>Araport11: a complete reannotation of the Arabidopsis thaliana reference genome.</title>
        <authorList>
            <person name="Cheng C.Y."/>
            <person name="Krishnakumar V."/>
            <person name="Chan A.P."/>
            <person name="Thibaud-Nissen F."/>
            <person name="Schobel S."/>
            <person name="Town C.D."/>
        </authorList>
    </citation>
    <scope>GENOME REANNOTATION</scope>
    <source>
        <strain>cv. Columbia</strain>
    </source>
</reference>
<reference key="3">
    <citation type="journal article" date="2007" name="Plant J.">
        <title>ABA-Hypersensitive Germination1 encodes a protein phosphatase 2C, an essential component of abscisic acid signaling in Arabidopsis seed.</title>
        <authorList>
            <person name="Nishimura N."/>
            <person name="Yoshida T."/>
            <person name="Kitahata N."/>
            <person name="Asami T."/>
            <person name="Shinozaki K."/>
            <person name="Hirayama T."/>
        </authorList>
    </citation>
    <scope>FUNCTION</scope>
    <scope>DEVELOPMENTAL STAGE</scope>
    <scope>INDUCTION BY ABA</scope>
    <scope>DISRUPTION PHENOTYPE</scope>
</reference>
<reference key="4">
    <citation type="journal article" date="2008" name="BMC Genomics">
        <title>Genome-wide and expression analysis of protein phosphatase 2C in rice and Arabidopsis.</title>
        <authorList>
            <person name="Xue T."/>
            <person name="Wang D."/>
            <person name="Zhang S."/>
            <person name="Ehlting J."/>
            <person name="Ni F."/>
            <person name="Jacab S."/>
            <person name="Zheng C."/>
            <person name="Zhong Y."/>
        </authorList>
    </citation>
    <scope>GENE FAMILY</scope>
    <scope>NOMENCLATURE</scope>
</reference>
<dbReference type="EC" id="3.1.3.16"/>
<dbReference type="EMBL" id="AB010074">
    <property type="protein sequence ID" value="BAB11245.1"/>
    <property type="molecule type" value="Genomic_DNA"/>
</dbReference>
<dbReference type="EMBL" id="CP002688">
    <property type="protein sequence ID" value="AED96123.1"/>
    <property type="molecule type" value="Genomic_DNA"/>
</dbReference>
<dbReference type="RefSeq" id="NP_199989.1">
    <property type="nucleotide sequence ID" value="NM_124555.3"/>
</dbReference>
<dbReference type="SMR" id="Q9FLI3"/>
<dbReference type="BioGRID" id="20495">
    <property type="interactions" value="28"/>
</dbReference>
<dbReference type="DIP" id="DIP-48990N"/>
<dbReference type="FunCoup" id="Q9FLI3">
    <property type="interactions" value="365"/>
</dbReference>
<dbReference type="IntAct" id="Q9FLI3">
    <property type="interactions" value="16"/>
</dbReference>
<dbReference type="STRING" id="3702.Q9FLI3"/>
<dbReference type="iPTMnet" id="Q9FLI3"/>
<dbReference type="PaxDb" id="3702-AT5G51760.1"/>
<dbReference type="ProteomicsDB" id="250918"/>
<dbReference type="EnsemblPlants" id="AT5G51760.1">
    <property type="protein sequence ID" value="AT5G51760.1"/>
    <property type="gene ID" value="AT5G51760"/>
</dbReference>
<dbReference type="GeneID" id="835250"/>
<dbReference type="Gramene" id="AT5G51760.1">
    <property type="protein sequence ID" value="AT5G51760.1"/>
    <property type="gene ID" value="AT5G51760"/>
</dbReference>
<dbReference type="KEGG" id="ath:AT5G51760"/>
<dbReference type="Araport" id="AT5G51760"/>
<dbReference type="TAIR" id="AT5G51760">
    <property type="gene designation" value="AHG1"/>
</dbReference>
<dbReference type="eggNOG" id="KOG0698">
    <property type="taxonomic scope" value="Eukaryota"/>
</dbReference>
<dbReference type="HOGENOM" id="CLU_013173_20_4_1"/>
<dbReference type="InParanoid" id="Q9FLI3"/>
<dbReference type="PhylomeDB" id="Q9FLI3"/>
<dbReference type="PRO" id="PR:Q9FLI3"/>
<dbReference type="Proteomes" id="UP000006548">
    <property type="component" value="Chromosome 5"/>
</dbReference>
<dbReference type="ExpressionAtlas" id="Q9FLI3">
    <property type="expression patterns" value="baseline and differential"/>
</dbReference>
<dbReference type="GO" id="GO:0046872">
    <property type="term" value="F:metal ion binding"/>
    <property type="evidence" value="ECO:0007669"/>
    <property type="project" value="UniProtKB-KW"/>
</dbReference>
<dbReference type="GO" id="GO:0004722">
    <property type="term" value="F:protein serine/threonine phosphatase activity"/>
    <property type="evidence" value="ECO:0007669"/>
    <property type="project" value="UniProtKB-EC"/>
</dbReference>
<dbReference type="GO" id="GO:0009737">
    <property type="term" value="P:response to abscisic acid"/>
    <property type="evidence" value="ECO:0000315"/>
    <property type="project" value="TAIR"/>
</dbReference>
<dbReference type="CDD" id="cd00143">
    <property type="entry name" value="PP2Cc"/>
    <property type="match status" value="1"/>
</dbReference>
<dbReference type="FunFam" id="3.60.40.10:FF:000111">
    <property type="entry name" value="Probable protein phosphatase 2C 75"/>
    <property type="match status" value="1"/>
</dbReference>
<dbReference type="Gene3D" id="3.60.40.10">
    <property type="entry name" value="PPM-type phosphatase domain"/>
    <property type="match status" value="1"/>
</dbReference>
<dbReference type="InterPro" id="IPR015655">
    <property type="entry name" value="PP2C"/>
</dbReference>
<dbReference type="InterPro" id="IPR000222">
    <property type="entry name" value="PP2C_BS"/>
</dbReference>
<dbReference type="InterPro" id="IPR036457">
    <property type="entry name" value="PPM-type-like_dom_sf"/>
</dbReference>
<dbReference type="InterPro" id="IPR001932">
    <property type="entry name" value="PPM-type_phosphatase-like_dom"/>
</dbReference>
<dbReference type="PANTHER" id="PTHR47992">
    <property type="entry name" value="PROTEIN PHOSPHATASE"/>
    <property type="match status" value="1"/>
</dbReference>
<dbReference type="Pfam" id="PF00481">
    <property type="entry name" value="PP2C"/>
    <property type="match status" value="1"/>
</dbReference>
<dbReference type="SMART" id="SM00332">
    <property type="entry name" value="PP2Cc"/>
    <property type="match status" value="1"/>
</dbReference>
<dbReference type="SUPFAM" id="SSF81606">
    <property type="entry name" value="PP2C-like"/>
    <property type="match status" value="1"/>
</dbReference>
<dbReference type="PROSITE" id="PS01032">
    <property type="entry name" value="PPM_1"/>
    <property type="match status" value="1"/>
</dbReference>
<dbReference type="PROSITE" id="PS51746">
    <property type="entry name" value="PPM_2"/>
    <property type="match status" value="1"/>
</dbReference>
<feature type="chain" id="PRO_0000367995" description="Probable protein phosphatase 2C 75">
    <location>
        <begin position="1"/>
        <end position="416"/>
    </location>
</feature>
<feature type="domain" description="PPM-type phosphatase" evidence="2">
    <location>
        <begin position="108"/>
        <end position="411"/>
    </location>
</feature>
<feature type="region of interest" description="Disordered" evidence="3">
    <location>
        <begin position="1"/>
        <end position="20"/>
    </location>
</feature>
<feature type="region of interest" description="Disordered" evidence="3">
    <location>
        <begin position="32"/>
        <end position="51"/>
    </location>
</feature>
<feature type="binding site" evidence="1">
    <location>
        <position position="149"/>
    </location>
    <ligand>
        <name>Mn(2+)</name>
        <dbReference type="ChEBI" id="CHEBI:29035"/>
        <label>1</label>
    </ligand>
</feature>
<feature type="binding site" evidence="1">
    <location>
        <position position="149"/>
    </location>
    <ligand>
        <name>Mn(2+)</name>
        <dbReference type="ChEBI" id="CHEBI:29035"/>
        <label>2</label>
    </ligand>
</feature>
<feature type="binding site" evidence="1">
    <location>
        <position position="150"/>
    </location>
    <ligand>
        <name>Mn(2+)</name>
        <dbReference type="ChEBI" id="CHEBI:29035"/>
        <label>1</label>
    </ligand>
</feature>
<feature type="binding site" evidence="1">
    <location>
        <position position="337"/>
    </location>
    <ligand>
        <name>Mn(2+)</name>
        <dbReference type="ChEBI" id="CHEBI:29035"/>
        <label>2</label>
    </ligand>
</feature>
<feature type="binding site" evidence="1">
    <location>
        <position position="402"/>
    </location>
    <ligand>
        <name>Mn(2+)</name>
        <dbReference type="ChEBI" id="CHEBI:29035"/>
        <label>2</label>
    </ligand>
</feature>
<evidence type="ECO:0000250" key="1"/>
<evidence type="ECO:0000255" key="2">
    <source>
        <dbReference type="PROSITE-ProRule" id="PRU01082"/>
    </source>
</evidence>
<evidence type="ECO:0000256" key="3">
    <source>
        <dbReference type="SAM" id="MobiDB-lite"/>
    </source>
</evidence>
<evidence type="ECO:0000269" key="4">
    <source>
    </source>
</evidence>
<evidence type="ECO:0000305" key="5"/>
<gene>
    <name type="primary">AHG1</name>
    <name type="ordered locus">At5g51760</name>
    <name type="ORF">MIO24.11</name>
</gene>
<comment type="function">
    <text evidence="4">Negative regulator of abscisic acid (ABA) responses during seed germination.</text>
</comment>
<comment type="catalytic activity">
    <reaction>
        <text>O-phospho-L-seryl-[protein] + H2O = L-seryl-[protein] + phosphate</text>
        <dbReference type="Rhea" id="RHEA:20629"/>
        <dbReference type="Rhea" id="RHEA-COMP:9863"/>
        <dbReference type="Rhea" id="RHEA-COMP:11604"/>
        <dbReference type="ChEBI" id="CHEBI:15377"/>
        <dbReference type="ChEBI" id="CHEBI:29999"/>
        <dbReference type="ChEBI" id="CHEBI:43474"/>
        <dbReference type="ChEBI" id="CHEBI:83421"/>
        <dbReference type="EC" id="3.1.3.16"/>
    </reaction>
</comment>
<comment type="catalytic activity">
    <reaction>
        <text>O-phospho-L-threonyl-[protein] + H2O = L-threonyl-[protein] + phosphate</text>
        <dbReference type="Rhea" id="RHEA:47004"/>
        <dbReference type="Rhea" id="RHEA-COMP:11060"/>
        <dbReference type="Rhea" id="RHEA-COMP:11605"/>
        <dbReference type="ChEBI" id="CHEBI:15377"/>
        <dbReference type="ChEBI" id="CHEBI:30013"/>
        <dbReference type="ChEBI" id="CHEBI:43474"/>
        <dbReference type="ChEBI" id="CHEBI:61977"/>
        <dbReference type="EC" id="3.1.3.16"/>
    </reaction>
</comment>
<comment type="cofactor">
    <cofactor evidence="1">
        <name>Mg(2+)</name>
        <dbReference type="ChEBI" id="CHEBI:18420"/>
    </cofactor>
    <cofactor evidence="1">
        <name>Mn(2+)</name>
        <dbReference type="ChEBI" id="CHEBI:29035"/>
    </cofactor>
    <text evidence="1">Binds 2 magnesium or manganese ions per subunit.</text>
</comment>
<comment type="interaction">
    <interactant intactId="EBI-2363348">
        <id>Q9FLI3</id>
    </interactant>
    <interactant intactId="EBI-979237">
        <id>Q9ATB4</id>
        <label>ADA2B</label>
    </interactant>
    <organismsDiffer>false</organismsDiffer>
    <experiments>3</experiments>
</comment>
<comment type="interaction">
    <interactant intactId="EBI-2363348">
        <id>Q9FLI3</id>
    </interactant>
    <interactant intactId="EBI-763232">
        <id>O80931</id>
        <label>AS1</label>
    </interactant>
    <organismsDiffer>false</organismsDiffer>
    <experiments>3</experiments>
</comment>
<comment type="interaction">
    <interactant intactId="EBI-2363348">
        <id>Q9FLI3</id>
    </interactant>
    <interactant intactId="EBI-4426649">
        <id>Q17TI5</id>
        <label>BRX</label>
    </interactant>
    <organismsDiffer>false</organismsDiffer>
    <experiments>3</experiments>
</comment>
<comment type="interaction">
    <interactant intactId="EBI-2363348">
        <id>Q9FLI3</id>
    </interactant>
    <interactant intactId="EBI-25512274">
        <id>A0SVK0</id>
        <label>DOG1</label>
    </interactant>
    <organismsDiffer>false</organismsDiffer>
    <experiments>3</experiments>
</comment>
<comment type="interaction">
    <interactant intactId="EBI-2363348">
        <id>Q9FLI3</id>
    </interactant>
    <interactant intactId="EBI-2012188">
        <id>Q8RXD6</id>
        <label>HUB1</label>
    </interactant>
    <organismsDiffer>false</organismsDiffer>
    <experiments>3</experiments>
</comment>
<comment type="interaction">
    <interactant intactId="EBI-2363348">
        <id>Q9FLI3</id>
    </interactant>
    <interactant intactId="EBI-25522919">
        <id>Q9SJW5</id>
        <label>LBD14</label>
    </interactant>
    <organismsDiffer>false</organismsDiffer>
    <experiments>3</experiments>
</comment>
<comment type="interaction">
    <interactant intactId="EBI-2363348">
        <id>Q9FLI3</id>
    </interactant>
    <interactant intactId="EBI-1645478">
        <id>Q38845</id>
        <label>PP2AA1</label>
    </interactant>
    <organismsDiffer>false</organismsDiffer>
    <experiments>3</experiments>
</comment>
<comment type="interaction">
    <interactant intactId="EBI-2363348">
        <id>Q9FLI3</id>
    </interactant>
    <interactant intactId="EBI-4425188">
        <id>Q93ZY2</id>
        <label>ROPGEF1</label>
    </interactant>
    <organismsDiffer>false</organismsDiffer>
    <experiments>2</experiments>
</comment>
<comment type="interaction">
    <interactant intactId="EBI-2363348">
        <id>Q9FLI3</id>
    </interactant>
    <interactant intactId="EBI-2363308">
        <id>Q39192</id>
        <label>SRK2D</label>
    </interactant>
    <organismsDiffer>false</organismsDiffer>
    <experiments>2</experiments>
</comment>
<comment type="interaction">
    <interactant intactId="EBI-2363348">
        <id>Q9FLI3</id>
    </interactant>
    <interactant intactId="EBI-2620383">
        <id>Q39193</id>
        <label>SRK2I</label>
    </interactant>
    <organismsDiffer>false</organismsDiffer>
    <experiments>2</experiments>
</comment>
<comment type="interaction">
    <interactant intactId="EBI-2363348">
        <id>Q9FLI3</id>
    </interactant>
    <interactant intactId="EBI-4426144">
        <id>Q9C9L2</id>
        <label>TCP15</label>
    </interactant>
    <organismsDiffer>false</organismsDiffer>
    <experiments>3</experiments>
</comment>
<comment type="interaction">
    <interactant intactId="EBI-2363348">
        <id>Q9FLI3</id>
    </interactant>
    <interactant intactId="EBI-15192297">
        <id>Q9LQF0</id>
        <label>TCP23</label>
    </interactant>
    <organismsDiffer>false</organismsDiffer>
    <experiments>3</experiments>
</comment>
<comment type="interaction">
    <interactant intactId="EBI-2363348">
        <id>Q9FLI3</id>
    </interactant>
    <interactant intactId="EBI-4426557">
        <id>Q84MB2</id>
        <label>TIFY8</label>
    </interactant>
    <organismsDiffer>false</organismsDiffer>
    <experiments>3</experiments>
</comment>
<comment type="interaction">
    <interactant intactId="EBI-2363348">
        <id>Q9FLI3</id>
    </interactant>
    <interactant intactId="EBI-15193683">
        <id>Q5CCK4</id>
        <label>VAL2</label>
    </interactant>
    <organismsDiffer>false</organismsDiffer>
    <experiments>5</experiments>
</comment>
<comment type="developmental stage">
    <text evidence="4">During germination, expressed in the embryo, vascular bundles and the root cap. In 6-day-old seedlings, expression in seed coat/endosperm disappears is detected only at the bases of the lateral root buds. Expressed in developing an mature siliques from 10 to 16 days after flowering (DAF).</text>
</comment>
<comment type="induction">
    <text evidence="4">By ABA.</text>
</comment>
<comment type="disruption phenotype">
    <text evidence="4">Hypersensitivity to ABA, salt and sucrose during seed germination.</text>
</comment>
<comment type="similarity">
    <text evidence="5">Belongs to the PP2C family.</text>
</comment>
<name>P2C75_ARATH</name>